<comment type="function">
    <text evidence="1">F(1)F(0) ATP synthase produces ATP from ADP in the presence of a proton or sodium gradient. F-type ATPases consist of two structural domains, F(1) containing the extramembraneous catalytic core and F(0) containing the membrane proton channel, linked together by a central stalk and a peripheral stalk. During catalysis, ATP synthesis in the catalytic domain of F(1) is coupled via a rotary mechanism of the central stalk subunits to proton translocation.</text>
</comment>
<comment type="function">
    <text evidence="1">This protein is part of the stalk that links CF(0) to CF(1). It either transmits conformational changes from CF(0) to CF(1) or is implicated in proton conduction.</text>
</comment>
<comment type="subunit">
    <text evidence="1">F-type ATPases have 2 components, F(1) - the catalytic core - and F(0) - the membrane proton channel. F(1) has five subunits: alpha(3), beta(3), gamma(1), delta(1), epsilon(1). F(0) has three main subunits: a(1), b(2) and c(10-14). The alpha and beta chains form an alternating ring which encloses part of the gamma chain. F(1) is attached to F(0) by a central stalk formed by the gamma and epsilon chains, while a peripheral stalk is formed by the delta and b chains.</text>
</comment>
<comment type="subcellular location">
    <subcellularLocation>
        <location evidence="1">Cell inner membrane</location>
        <topology evidence="1">Peripheral membrane protein</topology>
    </subcellularLocation>
</comment>
<comment type="similarity">
    <text evidence="1">Belongs to the ATPase delta chain family.</text>
</comment>
<keyword id="KW-0066">ATP synthesis</keyword>
<keyword id="KW-0997">Cell inner membrane</keyword>
<keyword id="KW-1003">Cell membrane</keyword>
<keyword id="KW-0139">CF(1)</keyword>
<keyword id="KW-0375">Hydrogen ion transport</keyword>
<keyword id="KW-0406">Ion transport</keyword>
<keyword id="KW-0472">Membrane</keyword>
<keyword id="KW-1185">Reference proteome</keyword>
<keyword id="KW-0813">Transport</keyword>
<feature type="chain" id="PRO_1000184750" description="ATP synthase subunit delta">
    <location>
        <begin position="1"/>
        <end position="178"/>
    </location>
</feature>
<evidence type="ECO:0000255" key="1">
    <source>
        <dbReference type="HAMAP-Rule" id="MF_01416"/>
    </source>
</evidence>
<organism>
    <name type="scientific">Methylococcus capsulatus (strain ATCC 33009 / NCIMB 11132 / Bath)</name>
    <dbReference type="NCBI Taxonomy" id="243233"/>
    <lineage>
        <taxon>Bacteria</taxon>
        <taxon>Pseudomonadati</taxon>
        <taxon>Pseudomonadota</taxon>
        <taxon>Gammaproteobacteria</taxon>
        <taxon>Methylococcales</taxon>
        <taxon>Methylococcaceae</taxon>
        <taxon>Methylococcus</taxon>
    </lineage>
</organism>
<gene>
    <name evidence="1" type="primary">atpH</name>
    <name type="ordered locus">MCA0009</name>
</gene>
<protein>
    <recommendedName>
        <fullName evidence="1">ATP synthase subunit delta</fullName>
    </recommendedName>
    <alternativeName>
        <fullName evidence="1">ATP synthase F(1) sector subunit delta</fullName>
    </alternativeName>
    <alternativeName>
        <fullName evidence="1">F-type ATPase subunit delta</fullName>
        <shortName evidence="1">F-ATPase subunit delta</shortName>
    </alternativeName>
</protein>
<sequence length="178" mass="19618">MSELTTLARPYAVAVFKAAKEAGNIQEWADMLEFLKQVMADPLMQRAASDPKAGKDRFIAKFLDLCKGHVIPEGENFIRLLASNGRLGLVGTIADMFAEFRAEEEGYVDVDVITAYPLEESETTNLNALVEKWMSRKGRLHVTVDESLIAGVVLRAGGRVVDASVHGQLQRLAKRLSN</sequence>
<name>ATPD_METCA</name>
<proteinExistence type="inferred from homology"/>
<accession>Q60CR7</accession>
<dbReference type="EMBL" id="AE017282">
    <property type="protein sequence ID" value="AAU90746.1"/>
    <property type="molecule type" value="Genomic_DNA"/>
</dbReference>
<dbReference type="RefSeq" id="WP_010959382.1">
    <property type="nucleotide sequence ID" value="NC_002977.6"/>
</dbReference>
<dbReference type="SMR" id="Q60CR7"/>
<dbReference type="STRING" id="243233.MCA0009"/>
<dbReference type="GeneID" id="88222362"/>
<dbReference type="KEGG" id="mca:MCA0009"/>
<dbReference type="eggNOG" id="COG0712">
    <property type="taxonomic scope" value="Bacteria"/>
</dbReference>
<dbReference type="HOGENOM" id="CLU_085114_3_0_6"/>
<dbReference type="Proteomes" id="UP000006821">
    <property type="component" value="Chromosome"/>
</dbReference>
<dbReference type="GO" id="GO:0005886">
    <property type="term" value="C:plasma membrane"/>
    <property type="evidence" value="ECO:0007669"/>
    <property type="project" value="UniProtKB-SubCell"/>
</dbReference>
<dbReference type="GO" id="GO:0045259">
    <property type="term" value="C:proton-transporting ATP synthase complex"/>
    <property type="evidence" value="ECO:0007669"/>
    <property type="project" value="UniProtKB-KW"/>
</dbReference>
<dbReference type="GO" id="GO:0046933">
    <property type="term" value="F:proton-transporting ATP synthase activity, rotational mechanism"/>
    <property type="evidence" value="ECO:0007669"/>
    <property type="project" value="UniProtKB-UniRule"/>
</dbReference>
<dbReference type="Gene3D" id="1.10.520.20">
    <property type="entry name" value="N-terminal domain of the delta subunit of the F1F0-ATP synthase"/>
    <property type="match status" value="1"/>
</dbReference>
<dbReference type="HAMAP" id="MF_01416">
    <property type="entry name" value="ATP_synth_delta_bact"/>
    <property type="match status" value="1"/>
</dbReference>
<dbReference type="InterPro" id="IPR026015">
    <property type="entry name" value="ATP_synth_OSCP/delta_N_sf"/>
</dbReference>
<dbReference type="InterPro" id="IPR000711">
    <property type="entry name" value="ATPase_OSCP/dsu"/>
</dbReference>
<dbReference type="NCBIfam" id="TIGR01145">
    <property type="entry name" value="ATP_synt_delta"/>
    <property type="match status" value="1"/>
</dbReference>
<dbReference type="NCBIfam" id="NF004402">
    <property type="entry name" value="PRK05758.2-2"/>
    <property type="match status" value="1"/>
</dbReference>
<dbReference type="PANTHER" id="PTHR11910">
    <property type="entry name" value="ATP SYNTHASE DELTA CHAIN"/>
    <property type="match status" value="1"/>
</dbReference>
<dbReference type="Pfam" id="PF00213">
    <property type="entry name" value="OSCP"/>
    <property type="match status" value="1"/>
</dbReference>
<dbReference type="PRINTS" id="PR00125">
    <property type="entry name" value="ATPASEDELTA"/>
</dbReference>
<dbReference type="SUPFAM" id="SSF47928">
    <property type="entry name" value="N-terminal domain of the delta subunit of the F1F0-ATP synthase"/>
    <property type="match status" value="1"/>
</dbReference>
<reference key="1">
    <citation type="journal article" date="2004" name="PLoS Biol.">
        <title>Genomic insights into methanotrophy: the complete genome sequence of Methylococcus capsulatus (Bath).</title>
        <authorList>
            <person name="Ward N.L."/>
            <person name="Larsen O."/>
            <person name="Sakwa J."/>
            <person name="Bruseth L."/>
            <person name="Khouri H.M."/>
            <person name="Durkin A.S."/>
            <person name="Dimitrov G."/>
            <person name="Jiang L."/>
            <person name="Scanlan D."/>
            <person name="Kang K.H."/>
            <person name="Lewis M.R."/>
            <person name="Nelson K.E."/>
            <person name="Methe B.A."/>
            <person name="Wu M."/>
            <person name="Heidelberg J.F."/>
            <person name="Paulsen I.T."/>
            <person name="Fouts D.E."/>
            <person name="Ravel J."/>
            <person name="Tettelin H."/>
            <person name="Ren Q."/>
            <person name="Read T.D."/>
            <person name="DeBoy R.T."/>
            <person name="Seshadri R."/>
            <person name="Salzberg S.L."/>
            <person name="Jensen H.B."/>
            <person name="Birkeland N.K."/>
            <person name="Nelson W.C."/>
            <person name="Dodson R.J."/>
            <person name="Grindhaug S.H."/>
            <person name="Holt I.E."/>
            <person name="Eidhammer I."/>
            <person name="Jonasen I."/>
            <person name="Vanaken S."/>
            <person name="Utterback T.R."/>
            <person name="Feldblyum T.V."/>
            <person name="Fraser C.M."/>
            <person name="Lillehaug J.R."/>
            <person name="Eisen J.A."/>
        </authorList>
    </citation>
    <scope>NUCLEOTIDE SEQUENCE [LARGE SCALE GENOMIC DNA]</scope>
    <source>
        <strain>ATCC 33009 / NCIMB 11132 / Bath</strain>
    </source>
</reference>